<accession>B6YSX5</accession>
<feature type="chain" id="PRO_1000124132" description="Protein translocase subunit SecE">
    <location>
        <begin position="1"/>
        <end position="61"/>
    </location>
</feature>
<feature type="transmembrane region" description="Helical" evidence="1">
    <location>
        <begin position="38"/>
        <end position="58"/>
    </location>
</feature>
<protein>
    <recommendedName>
        <fullName evidence="1">Protein translocase subunit SecE</fullName>
    </recommendedName>
    <alternativeName>
        <fullName evidence="1">Protein transport protein Sec61 gamma subunit homolog</fullName>
    </alternativeName>
</protein>
<proteinExistence type="inferred from homology"/>
<name>SECE_THEON</name>
<keyword id="KW-1003">Cell membrane</keyword>
<keyword id="KW-0472">Membrane</keyword>
<keyword id="KW-0653">Protein transport</keyword>
<keyword id="KW-0811">Translocation</keyword>
<keyword id="KW-0812">Transmembrane</keyword>
<keyword id="KW-1133">Transmembrane helix</keyword>
<keyword id="KW-0813">Transport</keyword>
<reference key="1">
    <citation type="journal article" date="2008" name="J. Bacteriol.">
        <title>The complete genome sequence of Thermococcus onnurineus NA1 reveals a mixed heterotrophic and carboxydotrophic metabolism.</title>
        <authorList>
            <person name="Lee H.S."/>
            <person name="Kang S.G."/>
            <person name="Bae S.S."/>
            <person name="Lim J.K."/>
            <person name="Cho Y."/>
            <person name="Kim Y.J."/>
            <person name="Jeon J.H."/>
            <person name="Cha S.-S."/>
            <person name="Kwon K.K."/>
            <person name="Kim H.-T."/>
            <person name="Park C.-J."/>
            <person name="Lee H.-W."/>
            <person name="Kim S.I."/>
            <person name="Chun J."/>
            <person name="Colwell R.R."/>
            <person name="Kim S.-J."/>
            <person name="Lee J.-H."/>
        </authorList>
    </citation>
    <scope>NUCLEOTIDE SEQUENCE [LARGE SCALE GENOMIC DNA]</scope>
    <source>
        <strain>NA1</strain>
    </source>
</reference>
<organism>
    <name type="scientific">Thermococcus onnurineus (strain NA1)</name>
    <dbReference type="NCBI Taxonomy" id="523850"/>
    <lineage>
        <taxon>Archaea</taxon>
        <taxon>Methanobacteriati</taxon>
        <taxon>Methanobacteriota</taxon>
        <taxon>Thermococci</taxon>
        <taxon>Thermococcales</taxon>
        <taxon>Thermococcaceae</taxon>
        <taxon>Thermococcus</taxon>
    </lineage>
</organism>
<dbReference type="EMBL" id="CP000855">
    <property type="protein sequence ID" value="ACJ15662.1"/>
    <property type="molecule type" value="Genomic_DNA"/>
</dbReference>
<dbReference type="RefSeq" id="WP_012571135.1">
    <property type="nucleotide sequence ID" value="NC_011529.1"/>
</dbReference>
<dbReference type="SMR" id="B6YSX5"/>
<dbReference type="STRING" id="523850.TON_0177"/>
<dbReference type="GeneID" id="7017833"/>
<dbReference type="KEGG" id="ton:TON_0177"/>
<dbReference type="PATRIC" id="fig|523850.10.peg.177"/>
<dbReference type="eggNOG" id="arCOG02204">
    <property type="taxonomic scope" value="Archaea"/>
</dbReference>
<dbReference type="HOGENOM" id="CLU_191921_0_1_2"/>
<dbReference type="OrthoDB" id="86216at2157"/>
<dbReference type="Proteomes" id="UP000002727">
    <property type="component" value="Chromosome"/>
</dbReference>
<dbReference type="GO" id="GO:0005886">
    <property type="term" value="C:plasma membrane"/>
    <property type="evidence" value="ECO:0007669"/>
    <property type="project" value="UniProtKB-SubCell"/>
</dbReference>
<dbReference type="GO" id="GO:0008320">
    <property type="term" value="F:protein transmembrane transporter activity"/>
    <property type="evidence" value="ECO:0007669"/>
    <property type="project" value="UniProtKB-UniRule"/>
</dbReference>
<dbReference type="GO" id="GO:0065002">
    <property type="term" value="P:intracellular protein transmembrane transport"/>
    <property type="evidence" value="ECO:0007669"/>
    <property type="project" value="UniProtKB-UniRule"/>
</dbReference>
<dbReference type="GO" id="GO:0009306">
    <property type="term" value="P:protein secretion"/>
    <property type="evidence" value="ECO:0007669"/>
    <property type="project" value="UniProtKB-UniRule"/>
</dbReference>
<dbReference type="GO" id="GO:0006605">
    <property type="term" value="P:protein targeting"/>
    <property type="evidence" value="ECO:0007669"/>
    <property type="project" value="UniProtKB-UniRule"/>
</dbReference>
<dbReference type="Gene3D" id="1.20.5.820">
    <property type="entry name" value="Preprotein translocase SecE subunit"/>
    <property type="match status" value="1"/>
</dbReference>
<dbReference type="HAMAP" id="MF_00422">
    <property type="entry name" value="SecE"/>
    <property type="match status" value="1"/>
</dbReference>
<dbReference type="InterPro" id="IPR023391">
    <property type="entry name" value="Prot_translocase_SecE_dom_sf"/>
</dbReference>
<dbReference type="InterPro" id="IPR008158">
    <property type="entry name" value="Translocase_Sec61-g"/>
</dbReference>
<dbReference type="InterPro" id="IPR001901">
    <property type="entry name" value="Translocase_SecE/Sec61-g"/>
</dbReference>
<dbReference type="NCBIfam" id="NF006909">
    <property type="entry name" value="PRK09400.1-4"/>
    <property type="match status" value="1"/>
</dbReference>
<dbReference type="NCBIfam" id="TIGR00327">
    <property type="entry name" value="secE_euk_arch"/>
    <property type="match status" value="1"/>
</dbReference>
<dbReference type="Pfam" id="PF00584">
    <property type="entry name" value="SecE"/>
    <property type="match status" value="1"/>
</dbReference>
<dbReference type="SUPFAM" id="SSF103456">
    <property type="entry name" value="Preprotein translocase SecE subunit"/>
    <property type="match status" value="1"/>
</dbReference>
<dbReference type="PROSITE" id="PS01067">
    <property type="entry name" value="SECE_SEC61G"/>
    <property type="match status" value="1"/>
</dbReference>
<sequence>MATTTEKLKNFFAELRRVLLVTKKPGWKEFKMAAKITGIGMILIGLIGLVIRMIGYLITGA</sequence>
<gene>
    <name evidence="1" type="primary">secE</name>
    <name type="ordered locus">TON_0177</name>
</gene>
<comment type="function">
    <text evidence="1">Essential subunit of the Sec protein translocation channel SecYEG. Clamps together the 2 halves of SecY. May contact the channel plug during translocation.</text>
</comment>
<comment type="subunit">
    <text evidence="1">Component of the Sec protein translocase complex. Heterotrimer consisting of SecY (alpha), SecG (beta) and SecE (gamma) subunits. The heterotrimers can form oligomers, although 1 heterotrimer is thought to be able to translocate proteins. Interacts with the ribosome. May interact with SecDF, and other proteins may be involved.</text>
</comment>
<comment type="subcellular location">
    <subcellularLocation>
        <location evidence="1">Cell membrane</location>
        <topology evidence="1">Single-pass membrane protein</topology>
    </subcellularLocation>
</comment>
<comment type="similarity">
    <text evidence="1">Belongs to the SecE/SEC61-gamma family.</text>
</comment>
<evidence type="ECO:0000255" key="1">
    <source>
        <dbReference type="HAMAP-Rule" id="MF_00422"/>
    </source>
</evidence>